<dbReference type="EC" id="2.4.1.227" evidence="1"/>
<dbReference type="EMBL" id="CP000572">
    <property type="protein sequence ID" value="ABN89117.1"/>
    <property type="molecule type" value="Genomic_DNA"/>
</dbReference>
<dbReference type="RefSeq" id="WP_004532004.1">
    <property type="nucleotide sequence ID" value="NC_009076.1"/>
</dbReference>
<dbReference type="SMR" id="A3NZL5"/>
<dbReference type="CAZy" id="GT28">
    <property type="family name" value="Glycosyltransferase Family 28"/>
</dbReference>
<dbReference type="KEGG" id="bpl:BURPS1106A_3550"/>
<dbReference type="HOGENOM" id="CLU_037404_2_0_4"/>
<dbReference type="UniPathway" id="UPA00219"/>
<dbReference type="Proteomes" id="UP000006738">
    <property type="component" value="Chromosome I"/>
</dbReference>
<dbReference type="GO" id="GO:0005886">
    <property type="term" value="C:plasma membrane"/>
    <property type="evidence" value="ECO:0007669"/>
    <property type="project" value="UniProtKB-SubCell"/>
</dbReference>
<dbReference type="GO" id="GO:0051991">
    <property type="term" value="F:UDP-N-acetyl-D-glucosamine:N-acetylmuramoyl-L-alanyl-D-glutamyl-meso-2,6-diaminopimelyl-D-alanyl-D-alanine-diphosphoundecaprenol 4-beta-N-acetylglucosaminlytransferase activity"/>
    <property type="evidence" value="ECO:0007669"/>
    <property type="project" value="RHEA"/>
</dbReference>
<dbReference type="GO" id="GO:0050511">
    <property type="term" value="F:undecaprenyldiphospho-muramoylpentapeptide beta-N-acetylglucosaminyltransferase activity"/>
    <property type="evidence" value="ECO:0007669"/>
    <property type="project" value="UniProtKB-UniRule"/>
</dbReference>
<dbReference type="GO" id="GO:0005975">
    <property type="term" value="P:carbohydrate metabolic process"/>
    <property type="evidence" value="ECO:0007669"/>
    <property type="project" value="InterPro"/>
</dbReference>
<dbReference type="GO" id="GO:0051301">
    <property type="term" value="P:cell division"/>
    <property type="evidence" value="ECO:0007669"/>
    <property type="project" value="UniProtKB-KW"/>
</dbReference>
<dbReference type="GO" id="GO:0071555">
    <property type="term" value="P:cell wall organization"/>
    <property type="evidence" value="ECO:0007669"/>
    <property type="project" value="UniProtKB-KW"/>
</dbReference>
<dbReference type="GO" id="GO:0030259">
    <property type="term" value="P:lipid glycosylation"/>
    <property type="evidence" value="ECO:0007669"/>
    <property type="project" value="UniProtKB-UniRule"/>
</dbReference>
<dbReference type="GO" id="GO:0009252">
    <property type="term" value="P:peptidoglycan biosynthetic process"/>
    <property type="evidence" value="ECO:0007669"/>
    <property type="project" value="UniProtKB-UniRule"/>
</dbReference>
<dbReference type="GO" id="GO:0008360">
    <property type="term" value="P:regulation of cell shape"/>
    <property type="evidence" value="ECO:0007669"/>
    <property type="project" value="UniProtKB-KW"/>
</dbReference>
<dbReference type="CDD" id="cd03785">
    <property type="entry name" value="GT28_MurG"/>
    <property type="match status" value="1"/>
</dbReference>
<dbReference type="Gene3D" id="3.40.50.2000">
    <property type="entry name" value="Glycogen Phosphorylase B"/>
    <property type="match status" value="2"/>
</dbReference>
<dbReference type="HAMAP" id="MF_00033">
    <property type="entry name" value="MurG"/>
    <property type="match status" value="1"/>
</dbReference>
<dbReference type="InterPro" id="IPR006009">
    <property type="entry name" value="GlcNAc_MurG"/>
</dbReference>
<dbReference type="InterPro" id="IPR007235">
    <property type="entry name" value="Glyco_trans_28_C"/>
</dbReference>
<dbReference type="InterPro" id="IPR004276">
    <property type="entry name" value="GlycoTrans_28_N"/>
</dbReference>
<dbReference type="NCBIfam" id="TIGR01133">
    <property type="entry name" value="murG"/>
    <property type="match status" value="1"/>
</dbReference>
<dbReference type="PANTHER" id="PTHR21015:SF22">
    <property type="entry name" value="GLYCOSYLTRANSFERASE"/>
    <property type="match status" value="1"/>
</dbReference>
<dbReference type="PANTHER" id="PTHR21015">
    <property type="entry name" value="UDP-N-ACETYLGLUCOSAMINE--N-ACETYLMURAMYL-(PENTAPEPTIDE) PYROPHOSPHORYL-UNDECAPRENOL N-ACETYLGLUCOSAMINE TRANSFERASE 1"/>
    <property type="match status" value="1"/>
</dbReference>
<dbReference type="Pfam" id="PF04101">
    <property type="entry name" value="Glyco_tran_28_C"/>
    <property type="match status" value="1"/>
</dbReference>
<dbReference type="Pfam" id="PF03033">
    <property type="entry name" value="Glyco_transf_28"/>
    <property type="match status" value="1"/>
</dbReference>
<dbReference type="SUPFAM" id="SSF53756">
    <property type="entry name" value="UDP-Glycosyltransferase/glycogen phosphorylase"/>
    <property type="match status" value="1"/>
</dbReference>
<evidence type="ECO:0000255" key="1">
    <source>
        <dbReference type="HAMAP-Rule" id="MF_00033"/>
    </source>
</evidence>
<protein>
    <recommendedName>
        <fullName evidence="1">UDP-N-acetylglucosamine--N-acetylmuramyl-(pentapeptide) pyrophosphoryl-undecaprenol N-acetylglucosamine transferase</fullName>
        <ecNumber evidence="1">2.4.1.227</ecNumber>
    </recommendedName>
    <alternativeName>
        <fullName evidence="1">Undecaprenyl-PP-MurNAc-pentapeptide-UDPGlcNAc GlcNAc transferase</fullName>
    </alternativeName>
</protein>
<sequence>MTSTQRTLMVMAGGTGGHVFPGLAVAHRMQAQGWRVVWLGSPAGMEATLVPRHGIPMEYVRFGGLRGKGLATKFALPFNLLRACAQSLRALRRVKPDVVLGMGGYITFPAGLVTVLTGRPLVLHEQNSIAGLTNKVLAKLAKRVLVAFPGALPNAEWTGNPIRTELARTEPPQARYAARSGKLRLLVVGGSLGAAALNEVVPRALALLAPDERPQVVHQAGAKHIDTLKENYEAAGLSCGSDVALVPFIDDMASAYANADLVICRSGAMTVAEIAAVGVAALFVPFPHAVDDHQTTNAEFLAEQGAAVLVQQRDLSAELLADWLRGQSRDSLAAMAERSRSLAKPDATDEVARVCAAVAGANLEGKQ</sequence>
<comment type="function">
    <text evidence="1">Cell wall formation. Catalyzes the transfer of a GlcNAc subunit on undecaprenyl-pyrophosphoryl-MurNAc-pentapeptide (lipid intermediate I) to form undecaprenyl-pyrophosphoryl-MurNAc-(pentapeptide)GlcNAc (lipid intermediate II).</text>
</comment>
<comment type="catalytic activity">
    <reaction evidence="1">
        <text>di-trans,octa-cis-undecaprenyl diphospho-N-acetyl-alpha-D-muramoyl-L-alanyl-D-glutamyl-meso-2,6-diaminopimeloyl-D-alanyl-D-alanine + UDP-N-acetyl-alpha-D-glucosamine = di-trans,octa-cis-undecaprenyl diphospho-[N-acetyl-alpha-D-glucosaminyl-(1-&gt;4)]-N-acetyl-alpha-D-muramoyl-L-alanyl-D-glutamyl-meso-2,6-diaminopimeloyl-D-alanyl-D-alanine + UDP + H(+)</text>
        <dbReference type="Rhea" id="RHEA:31227"/>
        <dbReference type="ChEBI" id="CHEBI:15378"/>
        <dbReference type="ChEBI" id="CHEBI:57705"/>
        <dbReference type="ChEBI" id="CHEBI:58223"/>
        <dbReference type="ChEBI" id="CHEBI:61387"/>
        <dbReference type="ChEBI" id="CHEBI:61388"/>
        <dbReference type="EC" id="2.4.1.227"/>
    </reaction>
</comment>
<comment type="pathway">
    <text evidence="1">Cell wall biogenesis; peptidoglycan biosynthesis.</text>
</comment>
<comment type="subcellular location">
    <subcellularLocation>
        <location evidence="1">Cell inner membrane</location>
        <topology evidence="1">Peripheral membrane protein</topology>
        <orientation evidence="1">Cytoplasmic side</orientation>
    </subcellularLocation>
</comment>
<comment type="similarity">
    <text evidence="1">Belongs to the glycosyltransferase 28 family. MurG subfamily.</text>
</comment>
<accession>A3NZL5</accession>
<proteinExistence type="inferred from homology"/>
<name>MURG_BURP0</name>
<gene>
    <name evidence="1" type="primary">murG</name>
    <name type="ordered locus">BURPS1106A_3550</name>
</gene>
<feature type="chain" id="PRO_1000002626" description="UDP-N-acetylglucosamine--N-acetylmuramyl-(pentapeptide) pyrophosphoryl-undecaprenol N-acetylglucosamine transferase">
    <location>
        <begin position="1"/>
        <end position="367"/>
    </location>
</feature>
<feature type="binding site" evidence="1">
    <location>
        <begin position="15"/>
        <end position="17"/>
    </location>
    <ligand>
        <name>UDP-N-acetyl-alpha-D-glucosamine</name>
        <dbReference type="ChEBI" id="CHEBI:57705"/>
    </ligand>
</feature>
<feature type="binding site" evidence="1">
    <location>
        <position position="127"/>
    </location>
    <ligand>
        <name>UDP-N-acetyl-alpha-D-glucosamine</name>
        <dbReference type="ChEBI" id="CHEBI:57705"/>
    </ligand>
</feature>
<feature type="binding site" evidence="1">
    <location>
        <position position="163"/>
    </location>
    <ligand>
        <name>UDP-N-acetyl-alpha-D-glucosamine</name>
        <dbReference type="ChEBI" id="CHEBI:57705"/>
    </ligand>
</feature>
<feature type="binding site" evidence="1">
    <location>
        <position position="191"/>
    </location>
    <ligand>
        <name>UDP-N-acetyl-alpha-D-glucosamine</name>
        <dbReference type="ChEBI" id="CHEBI:57705"/>
    </ligand>
</feature>
<feature type="binding site" evidence="1">
    <location>
        <position position="249"/>
    </location>
    <ligand>
        <name>UDP-N-acetyl-alpha-D-glucosamine</name>
        <dbReference type="ChEBI" id="CHEBI:57705"/>
    </ligand>
</feature>
<feature type="binding site" evidence="1">
    <location>
        <position position="294"/>
    </location>
    <ligand>
        <name>UDP-N-acetyl-alpha-D-glucosamine</name>
        <dbReference type="ChEBI" id="CHEBI:57705"/>
    </ligand>
</feature>
<organism>
    <name type="scientific">Burkholderia pseudomallei (strain 1106a)</name>
    <dbReference type="NCBI Taxonomy" id="357348"/>
    <lineage>
        <taxon>Bacteria</taxon>
        <taxon>Pseudomonadati</taxon>
        <taxon>Pseudomonadota</taxon>
        <taxon>Betaproteobacteria</taxon>
        <taxon>Burkholderiales</taxon>
        <taxon>Burkholderiaceae</taxon>
        <taxon>Burkholderia</taxon>
        <taxon>pseudomallei group</taxon>
    </lineage>
</organism>
<keyword id="KW-0131">Cell cycle</keyword>
<keyword id="KW-0132">Cell division</keyword>
<keyword id="KW-0997">Cell inner membrane</keyword>
<keyword id="KW-1003">Cell membrane</keyword>
<keyword id="KW-0133">Cell shape</keyword>
<keyword id="KW-0961">Cell wall biogenesis/degradation</keyword>
<keyword id="KW-0328">Glycosyltransferase</keyword>
<keyword id="KW-0472">Membrane</keyword>
<keyword id="KW-0573">Peptidoglycan synthesis</keyword>
<keyword id="KW-0808">Transferase</keyword>
<reference key="1">
    <citation type="journal article" date="2010" name="Genome Biol. Evol.">
        <title>Continuing evolution of Burkholderia mallei through genome reduction and large-scale rearrangements.</title>
        <authorList>
            <person name="Losada L."/>
            <person name="Ronning C.M."/>
            <person name="DeShazer D."/>
            <person name="Woods D."/>
            <person name="Fedorova N."/>
            <person name="Kim H.S."/>
            <person name="Shabalina S.A."/>
            <person name="Pearson T.R."/>
            <person name="Brinkac L."/>
            <person name="Tan P."/>
            <person name="Nandi T."/>
            <person name="Crabtree J."/>
            <person name="Badger J."/>
            <person name="Beckstrom-Sternberg S."/>
            <person name="Saqib M."/>
            <person name="Schutzer S.E."/>
            <person name="Keim P."/>
            <person name="Nierman W.C."/>
        </authorList>
    </citation>
    <scope>NUCLEOTIDE SEQUENCE [LARGE SCALE GENOMIC DNA]</scope>
    <source>
        <strain>1106a</strain>
    </source>
</reference>